<comment type="function">
    <text evidence="1">Synthesizes alpha-1,4-glucan chains using ADP-glucose.</text>
</comment>
<comment type="catalytic activity">
    <reaction evidence="1">
        <text>[(1-&gt;4)-alpha-D-glucosyl](n) + ADP-alpha-D-glucose = [(1-&gt;4)-alpha-D-glucosyl](n+1) + ADP + H(+)</text>
        <dbReference type="Rhea" id="RHEA:18189"/>
        <dbReference type="Rhea" id="RHEA-COMP:9584"/>
        <dbReference type="Rhea" id="RHEA-COMP:9587"/>
        <dbReference type="ChEBI" id="CHEBI:15378"/>
        <dbReference type="ChEBI" id="CHEBI:15444"/>
        <dbReference type="ChEBI" id="CHEBI:57498"/>
        <dbReference type="ChEBI" id="CHEBI:456216"/>
        <dbReference type="EC" id="2.4.1.21"/>
    </reaction>
</comment>
<comment type="pathway">
    <text evidence="1">Glycan biosynthesis; glycogen biosynthesis.</text>
</comment>
<comment type="similarity">
    <text evidence="1">Belongs to the glycosyltransferase 1 family. Bacterial/plant glycogen synthase subfamily.</text>
</comment>
<evidence type="ECO:0000255" key="1">
    <source>
        <dbReference type="HAMAP-Rule" id="MF_00484"/>
    </source>
</evidence>
<keyword id="KW-0320">Glycogen biosynthesis</keyword>
<keyword id="KW-0328">Glycosyltransferase</keyword>
<keyword id="KW-1185">Reference proteome</keyword>
<keyword id="KW-0808">Transferase</keyword>
<reference key="1">
    <citation type="journal article" date="2009" name="BMC Microbiol.">
        <title>The genome sequence of Geobacter metallireducens: features of metabolism, physiology and regulation common and dissimilar to Geobacter sulfurreducens.</title>
        <authorList>
            <person name="Aklujkar M."/>
            <person name="Krushkal J."/>
            <person name="DiBartolo G."/>
            <person name="Lapidus A."/>
            <person name="Land M.L."/>
            <person name="Lovley D.R."/>
        </authorList>
    </citation>
    <scope>NUCLEOTIDE SEQUENCE [LARGE SCALE GENOMIC DNA]</scope>
    <source>
        <strain>ATCC 53774 / DSM 7210 / GS-15</strain>
    </source>
</reference>
<accession>Q39QT6</accession>
<organism>
    <name type="scientific">Geobacter metallireducens (strain ATCC 53774 / DSM 7210 / GS-15)</name>
    <dbReference type="NCBI Taxonomy" id="269799"/>
    <lineage>
        <taxon>Bacteria</taxon>
        <taxon>Pseudomonadati</taxon>
        <taxon>Thermodesulfobacteriota</taxon>
        <taxon>Desulfuromonadia</taxon>
        <taxon>Geobacterales</taxon>
        <taxon>Geobacteraceae</taxon>
        <taxon>Geobacter</taxon>
    </lineage>
</organism>
<sequence length="484" mass="53848">MKILQVASEVAPLAKTGGLADVVAALPKELRRMGHDVRVAIPFYKEVSSGNLPVRKARKSAEVALGGELHKGYLRQTALGEVPVYLVENRDLFGRDHLYGPPEGDYPDNPLRFAFFCRSVLQFLKRMDFRPDVIHCHDWQSALIPIILKYELGHDPFFNRTAVIFTIHNLAYQGVFPADALAQTGLDPSLFSVDRIEFYGRINLLKGAILAADAITTVSETYCHEILSPGQGCGLEGVLERRQADLAGILNGLDSEEWNPSLDRRIFRNYSSKSLAGKGADKRELQRELGLKAGASIPIIGMVGRIVEQKGIDLVIDLLPRFAAEELQLVILGTGDLRLMHQLHEFRNKGVKNVSINLGFKEPLAPKIYAGCDMFLMPSRFEPCGLSQLIALSYGTVPIVRRTGGLADTVIDVTANPREGNGFSFTEFSADACWDAVQRALAAYRDREGWRKIMRRGMLRDVSWRSAAGKYEELYRTCADNRRG</sequence>
<protein>
    <recommendedName>
        <fullName evidence="1">Glycogen synthase 2</fullName>
        <ecNumber evidence="1">2.4.1.21</ecNumber>
    </recommendedName>
    <alternativeName>
        <fullName evidence="1">Starch [bacterial glycogen] synthase 2</fullName>
    </alternativeName>
</protein>
<name>GLGA2_GEOMG</name>
<proteinExistence type="inferred from homology"/>
<gene>
    <name evidence="1" type="primary">glgA2</name>
    <name type="ordered locus">Gmet_3175</name>
</gene>
<dbReference type="EC" id="2.4.1.21" evidence="1"/>
<dbReference type="EMBL" id="CP000148">
    <property type="protein sequence ID" value="ABB33388.1"/>
    <property type="molecule type" value="Genomic_DNA"/>
</dbReference>
<dbReference type="SMR" id="Q39QT6"/>
<dbReference type="STRING" id="269799.Gmet_3175"/>
<dbReference type="CAZy" id="GT5">
    <property type="family name" value="Glycosyltransferase Family 5"/>
</dbReference>
<dbReference type="KEGG" id="gme:Gmet_3175"/>
<dbReference type="eggNOG" id="COG0297">
    <property type="taxonomic scope" value="Bacteria"/>
</dbReference>
<dbReference type="HOGENOM" id="CLU_009583_18_2_7"/>
<dbReference type="UniPathway" id="UPA00164"/>
<dbReference type="Proteomes" id="UP000007073">
    <property type="component" value="Chromosome"/>
</dbReference>
<dbReference type="GO" id="GO:0005829">
    <property type="term" value="C:cytosol"/>
    <property type="evidence" value="ECO:0007669"/>
    <property type="project" value="TreeGrafter"/>
</dbReference>
<dbReference type="GO" id="GO:0009011">
    <property type="term" value="F:alpha-1,4-glucan glucosyltransferase (ADP-glucose donor) activity"/>
    <property type="evidence" value="ECO:0007669"/>
    <property type="project" value="UniProtKB-UniRule"/>
</dbReference>
<dbReference type="GO" id="GO:0004373">
    <property type="term" value="F:alpha-1,4-glucan glucosyltransferase (UDP-glucose donor) activity"/>
    <property type="evidence" value="ECO:0007669"/>
    <property type="project" value="InterPro"/>
</dbReference>
<dbReference type="GO" id="GO:0005978">
    <property type="term" value="P:glycogen biosynthetic process"/>
    <property type="evidence" value="ECO:0007669"/>
    <property type="project" value="UniProtKB-UniRule"/>
</dbReference>
<dbReference type="CDD" id="cd03791">
    <property type="entry name" value="GT5_Glycogen_synthase_DULL1-like"/>
    <property type="match status" value="1"/>
</dbReference>
<dbReference type="Gene3D" id="3.40.50.2000">
    <property type="entry name" value="Glycogen Phosphorylase B"/>
    <property type="match status" value="2"/>
</dbReference>
<dbReference type="HAMAP" id="MF_00484">
    <property type="entry name" value="Glycogen_synth"/>
    <property type="match status" value="1"/>
</dbReference>
<dbReference type="InterPro" id="IPR001296">
    <property type="entry name" value="Glyco_trans_1"/>
</dbReference>
<dbReference type="InterPro" id="IPR011835">
    <property type="entry name" value="GS/SS"/>
</dbReference>
<dbReference type="InterPro" id="IPR013534">
    <property type="entry name" value="Starch_synth_cat_dom"/>
</dbReference>
<dbReference type="NCBIfam" id="TIGR02095">
    <property type="entry name" value="glgA"/>
    <property type="match status" value="1"/>
</dbReference>
<dbReference type="NCBIfam" id="NF001899">
    <property type="entry name" value="PRK00654.1-2"/>
    <property type="match status" value="1"/>
</dbReference>
<dbReference type="PANTHER" id="PTHR45825:SF11">
    <property type="entry name" value="ALPHA AMYLASE DOMAIN-CONTAINING PROTEIN"/>
    <property type="match status" value="1"/>
</dbReference>
<dbReference type="PANTHER" id="PTHR45825">
    <property type="entry name" value="GRANULE-BOUND STARCH SYNTHASE 1, CHLOROPLASTIC/AMYLOPLASTIC"/>
    <property type="match status" value="1"/>
</dbReference>
<dbReference type="Pfam" id="PF08323">
    <property type="entry name" value="Glyco_transf_5"/>
    <property type="match status" value="1"/>
</dbReference>
<dbReference type="Pfam" id="PF00534">
    <property type="entry name" value="Glycos_transf_1"/>
    <property type="match status" value="1"/>
</dbReference>
<dbReference type="SUPFAM" id="SSF53756">
    <property type="entry name" value="UDP-Glycosyltransferase/glycogen phosphorylase"/>
    <property type="match status" value="1"/>
</dbReference>
<feature type="chain" id="PRO_0000230242" description="Glycogen synthase 2">
    <location>
        <begin position="1"/>
        <end position="484"/>
    </location>
</feature>
<feature type="binding site" evidence="1">
    <location>
        <position position="15"/>
    </location>
    <ligand>
        <name>ADP-alpha-D-glucose</name>
        <dbReference type="ChEBI" id="CHEBI:57498"/>
    </ligand>
</feature>